<sequence>MSAKERGDQNAVVDALRSIQPAVFIPASVVIVAMIVVSVVYSSVAENAFVRLNSAITGGVGWWYILVATGFVVFALYCGISRIGTIRLGRDDELPEFSFWAWLAMLFSAGMGIGLVFYGVAEPLSHYLRPPRSRGVPALTDAAANQAMALTVFHWGLHAWAIYVVVGLGMAYMTYRRGRPLSVRWLLEPVVGRGRVEGALGHAVDVIAIVGTLFGVATSLGFGITQIASGLEYLGWIRVDNWWMVGMIAAITATATASVVSGVSKGLKWLSNINMALAAALALFVLLLGPTLFLLQSWVQNLGGYVQSLPQFMLRTAPFSHDGWLGDWTIFYWGWWISWAPFVGMFIARISRGRTIREFIGAVLLVPTVIASLWFTIFGDSALLRQRNNGDMLVNGAVDTNTSLFRLLDGLPIGAITSVLAVLVIVFFFVTSSDSGSLVIDILSAGGELDPPKLTRVYWAVLEGVAAAVLLLIGGAGSLTALRTAAIATALPFSIVMVVACYAMTKAFHFDLAATPRLLHVTVPDVVAAGNRRRHDISATLSGLIAVRDVDSGTYIVHPDTGALTVTAPPDPLDDHVFESDRHVTRRNTTSSR</sequence>
<organism>
    <name type="scientific">Mycobacterium bovis (strain ATCC BAA-935 / AF2122/97)</name>
    <dbReference type="NCBI Taxonomy" id="233413"/>
    <lineage>
        <taxon>Bacteria</taxon>
        <taxon>Bacillati</taxon>
        <taxon>Actinomycetota</taxon>
        <taxon>Actinomycetes</taxon>
        <taxon>Mycobacteriales</taxon>
        <taxon>Mycobacteriaceae</taxon>
        <taxon>Mycobacterium</taxon>
        <taxon>Mycobacterium tuberculosis complex</taxon>
    </lineage>
</organism>
<accession>P63696</accession>
<accession>A0A1R3XWU3</accession>
<accession>O05909</accession>
<accession>X2BGK1</accession>
<proteinExistence type="inferred from homology"/>
<feature type="chain" id="PRO_0000201498" description="Uncharacterized transporter Mb0941">
    <location>
        <begin position="1"/>
        <end position="593"/>
    </location>
</feature>
<feature type="transmembrane region" description="Helical" evidence="1">
    <location>
        <begin position="21"/>
        <end position="41"/>
    </location>
</feature>
<feature type="transmembrane region" description="Helical" evidence="1">
    <location>
        <begin position="60"/>
        <end position="80"/>
    </location>
</feature>
<feature type="transmembrane region" description="Helical" evidence="1">
    <location>
        <begin position="97"/>
        <end position="117"/>
    </location>
</feature>
<feature type="transmembrane region" description="Helical" evidence="1">
    <location>
        <begin position="148"/>
        <end position="168"/>
    </location>
</feature>
<feature type="transmembrane region" description="Helical" evidence="1">
    <location>
        <begin position="204"/>
        <end position="224"/>
    </location>
</feature>
<feature type="transmembrane region" description="Helical" evidence="1">
    <location>
        <begin position="243"/>
        <end position="263"/>
    </location>
</feature>
<feature type="transmembrane region" description="Helical" evidence="1">
    <location>
        <begin position="275"/>
        <end position="295"/>
    </location>
</feature>
<feature type="transmembrane region" description="Helical" evidence="1">
    <location>
        <begin position="328"/>
        <end position="348"/>
    </location>
</feature>
<feature type="transmembrane region" description="Helical" evidence="1">
    <location>
        <begin position="359"/>
        <end position="379"/>
    </location>
</feature>
<feature type="transmembrane region" description="Helical" evidence="1">
    <location>
        <begin position="410"/>
        <end position="430"/>
    </location>
</feature>
<feature type="transmembrane region" description="Helical" evidence="1">
    <location>
        <begin position="457"/>
        <end position="477"/>
    </location>
</feature>
<feature type="transmembrane region" description="Helical" evidence="1">
    <location>
        <begin position="485"/>
        <end position="505"/>
    </location>
</feature>
<dbReference type="EMBL" id="LT708304">
    <property type="protein sequence ID" value="SIT99539.1"/>
    <property type="molecule type" value="Genomic_DNA"/>
</dbReference>
<dbReference type="RefSeq" id="NP_854598.1">
    <property type="nucleotide sequence ID" value="NC_002945.3"/>
</dbReference>
<dbReference type="RefSeq" id="WP_003404749.1">
    <property type="nucleotide sequence ID" value="NC_002945.4"/>
</dbReference>
<dbReference type="SMR" id="P63696"/>
<dbReference type="KEGG" id="mbo:BQ2027_MB0941"/>
<dbReference type="PATRIC" id="fig|233413.5.peg.1024"/>
<dbReference type="Proteomes" id="UP000001419">
    <property type="component" value="Chromosome"/>
</dbReference>
<dbReference type="GO" id="GO:0005886">
    <property type="term" value="C:plasma membrane"/>
    <property type="evidence" value="ECO:0007669"/>
    <property type="project" value="UniProtKB-SubCell"/>
</dbReference>
<dbReference type="GO" id="GO:0022857">
    <property type="term" value="F:transmembrane transporter activity"/>
    <property type="evidence" value="ECO:0007669"/>
    <property type="project" value="InterPro"/>
</dbReference>
<dbReference type="InterPro" id="IPR018093">
    <property type="entry name" value="BCCT_CS"/>
</dbReference>
<dbReference type="InterPro" id="IPR000060">
    <property type="entry name" value="BCCT_transptr"/>
</dbReference>
<dbReference type="NCBIfam" id="TIGR00842">
    <property type="entry name" value="bcct"/>
    <property type="match status" value="1"/>
</dbReference>
<dbReference type="PANTHER" id="PTHR30047:SF7">
    <property type="entry name" value="HIGH-AFFINITY CHOLINE TRANSPORT PROTEIN"/>
    <property type="match status" value="1"/>
</dbReference>
<dbReference type="PANTHER" id="PTHR30047">
    <property type="entry name" value="HIGH-AFFINITY CHOLINE TRANSPORT PROTEIN-RELATED"/>
    <property type="match status" value="1"/>
</dbReference>
<dbReference type="Pfam" id="PF02028">
    <property type="entry name" value="BCCT"/>
    <property type="match status" value="1"/>
</dbReference>
<dbReference type="PROSITE" id="PS01303">
    <property type="entry name" value="BCCT"/>
    <property type="match status" value="1"/>
</dbReference>
<keyword id="KW-1003">Cell membrane</keyword>
<keyword id="KW-0472">Membrane</keyword>
<keyword id="KW-1185">Reference proteome</keyword>
<keyword id="KW-0812">Transmembrane</keyword>
<keyword id="KW-1133">Transmembrane helix</keyword>
<keyword id="KW-0813">Transport</keyword>
<gene>
    <name type="ordered locus">BQ2027_MB0941</name>
</gene>
<comment type="subcellular location">
    <subcellularLocation>
        <location evidence="2">Cell membrane</location>
        <topology evidence="2">Multi-pass membrane protein</topology>
    </subcellularLocation>
</comment>
<comment type="similarity">
    <text evidence="2">Belongs to the BCCT transporter (TC 2.A.15) family.</text>
</comment>
<name>Y941_MYCBO</name>
<evidence type="ECO:0000255" key="1"/>
<evidence type="ECO:0000305" key="2"/>
<protein>
    <recommendedName>
        <fullName>Uncharacterized transporter Mb0941</fullName>
    </recommendedName>
</protein>
<reference key="1">
    <citation type="journal article" date="2003" name="Proc. Natl. Acad. Sci. U.S.A.">
        <title>The complete genome sequence of Mycobacterium bovis.</title>
        <authorList>
            <person name="Garnier T."/>
            <person name="Eiglmeier K."/>
            <person name="Camus J.-C."/>
            <person name="Medina N."/>
            <person name="Mansoor H."/>
            <person name="Pryor M."/>
            <person name="Duthoy S."/>
            <person name="Grondin S."/>
            <person name="Lacroix C."/>
            <person name="Monsempe C."/>
            <person name="Simon S."/>
            <person name="Harris B."/>
            <person name="Atkin R."/>
            <person name="Doggett J."/>
            <person name="Mayes R."/>
            <person name="Keating L."/>
            <person name="Wheeler P.R."/>
            <person name="Parkhill J."/>
            <person name="Barrell B.G."/>
            <person name="Cole S.T."/>
            <person name="Gordon S.V."/>
            <person name="Hewinson R.G."/>
        </authorList>
    </citation>
    <scope>NUCLEOTIDE SEQUENCE [LARGE SCALE GENOMIC DNA]</scope>
    <source>
        <strain>ATCC BAA-935 / AF2122/97</strain>
    </source>
</reference>
<reference key="2">
    <citation type="journal article" date="2017" name="Genome Announc.">
        <title>Updated reference genome sequence and annotation of Mycobacterium bovis AF2122/97.</title>
        <authorList>
            <person name="Malone K.M."/>
            <person name="Farrell D."/>
            <person name="Stuber T.P."/>
            <person name="Schubert O.T."/>
            <person name="Aebersold R."/>
            <person name="Robbe-Austerman S."/>
            <person name="Gordon S.V."/>
        </authorList>
    </citation>
    <scope>NUCLEOTIDE SEQUENCE [LARGE SCALE GENOMIC DNA]</scope>
    <scope>GENOME REANNOTATION</scope>
    <source>
        <strain>ATCC BAA-935 / AF2122/97</strain>
    </source>
</reference>